<reference key="1">
    <citation type="journal article" date="2002" name="J. Bacteriol.">
        <title>Whole-genome comparison of Mycobacterium tuberculosis clinical and laboratory strains.</title>
        <authorList>
            <person name="Fleischmann R.D."/>
            <person name="Alland D."/>
            <person name="Eisen J.A."/>
            <person name="Carpenter L."/>
            <person name="White O."/>
            <person name="Peterson J.D."/>
            <person name="DeBoy R.T."/>
            <person name="Dodson R.J."/>
            <person name="Gwinn M.L."/>
            <person name="Haft D.H."/>
            <person name="Hickey E.K."/>
            <person name="Kolonay J.F."/>
            <person name="Nelson W.C."/>
            <person name="Umayam L.A."/>
            <person name="Ermolaeva M.D."/>
            <person name="Salzberg S.L."/>
            <person name="Delcher A."/>
            <person name="Utterback T.R."/>
            <person name="Weidman J.F."/>
            <person name="Khouri H.M."/>
            <person name="Gill J."/>
            <person name="Mikula A."/>
            <person name="Bishai W."/>
            <person name="Jacobs W.R. Jr."/>
            <person name="Venter J.C."/>
            <person name="Fraser C.M."/>
        </authorList>
    </citation>
    <scope>NUCLEOTIDE SEQUENCE [LARGE SCALE GENOMIC DNA]</scope>
    <source>
        <strain>CDC 1551 / Oshkosh</strain>
    </source>
</reference>
<keyword id="KW-0378">Hydrolase</keyword>
<keyword id="KW-0460">Magnesium</keyword>
<keyword id="KW-0479">Metal-binding</keyword>
<keyword id="KW-0540">Nuclease</keyword>
<keyword id="KW-1185">Reference proteome</keyword>
<keyword id="KW-1277">Toxin-antitoxin system</keyword>
<evidence type="ECO:0000255" key="1">
    <source>
        <dbReference type="HAMAP-Rule" id="MF_00265"/>
    </source>
</evidence>
<dbReference type="EC" id="3.1.-.-" evidence="1"/>
<dbReference type="EMBL" id="AE000516">
    <property type="protein sequence ID" value="AAK47148.1"/>
    <property type="molecule type" value="Genomic_DNA"/>
</dbReference>
<dbReference type="PIR" id="F70880">
    <property type="entry name" value="F70880"/>
</dbReference>
<dbReference type="RefSeq" id="WP_003414064.1">
    <property type="nucleotide sequence ID" value="NZ_KK341227.1"/>
</dbReference>
<dbReference type="SMR" id="P9WF56"/>
<dbReference type="KEGG" id="mtc:MT2829"/>
<dbReference type="PATRIC" id="fig|83331.31.peg.3050"/>
<dbReference type="HOGENOM" id="CLU_144760_0_0_11"/>
<dbReference type="Proteomes" id="UP000001020">
    <property type="component" value="Chromosome"/>
</dbReference>
<dbReference type="GO" id="GO:0000287">
    <property type="term" value="F:magnesium ion binding"/>
    <property type="evidence" value="ECO:0007669"/>
    <property type="project" value="UniProtKB-UniRule"/>
</dbReference>
<dbReference type="GO" id="GO:0004540">
    <property type="term" value="F:RNA nuclease activity"/>
    <property type="evidence" value="ECO:0007669"/>
    <property type="project" value="InterPro"/>
</dbReference>
<dbReference type="CDD" id="cd09871">
    <property type="entry name" value="PIN_MtVapC28-VapC30-like"/>
    <property type="match status" value="1"/>
</dbReference>
<dbReference type="Gene3D" id="3.40.50.1010">
    <property type="entry name" value="5'-nuclease"/>
    <property type="match status" value="1"/>
</dbReference>
<dbReference type="HAMAP" id="MF_00265">
    <property type="entry name" value="VapC_Nob1"/>
    <property type="match status" value="1"/>
</dbReference>
<dbReference type="InterPro" id="IPR029060">
    <property type="entry name" value="PIN-like_dom_sf"/>
</dbReference>
<dbReference type="InterPro" id="IPR002716">
    <property type="entry name" value="PIN_dom"/>
</dbReference>
<dbReference type="InterPro" id="IPR050556">
    <property type="entry name" value="Type_II_TA_system_RNase"/>
</dbReference>
<dbReference type="InterPro" id="IPR022907">
    <property type="entry name" value="VapC_family"/>
</dbReference>
<dbReference type="PANTHER" id="PTHR33653">
    <property type="entry name" value="RIBONUCLEASE VAPC2"/>
    <property type="match status" value="1"/>
</dbReference>
<dbReference type="PANTHER" id="PTHR33653:SF1">
    <property type="entry name" value="RIBONUCLEASE VAPC2"/>
    <property type="match status" value="1"/>
</dbReference>
<dbReference type="Pfam" id="PF01850">
    <property type="entry name" value="PIN"/>
    <property type="match status" value="1"/>
</dbReference>
<dbReference type="SUPFAM" id="SSF88723">
    <property type="entry name" value="PIN domain-like"/>
    <property type="match status" value="1"/>
</dbReference>
<protein>
    <recommendedName>
        <fullName evidence="1">Ribonuclease VapC42</fullName>
        <shortName evidence="1">RNase VapC42</shortName>
        <ecNumber evidence="1">3.1.-.-</ecNumber>
    </recommendedName>
    <alternativeName>
        <fullName evidence="1">Toxin VapC42</fullName>
    </alternativeName>
</protein>
<name>VPC42_MYCTO</name>
<proteinExistence type="inferred from homology"/>
<comment type="function">
    <text evidence="1">Toxic component of a type II toxin-antitoxin (TA) system. An RNase. Its cognate antitoxin is VapB42 (By similarity).</text>
</comment>
<comment type="cofactor">
    <cofactor evidence="1">
        <name>Mg(2+)</name>
        <dbReference type="ChEBI" id="CHEBI:18420"/>
    </cofactor>
</comment>
<comment type="similarity">
    <text evidence="1">Belongs to the PINc/VapC protein family.</text>
</comment>
<gene>
    <name evidence="1" type="primary">vapC42</name>
    <name type="ordered locus">MT2829</name>
</gene>
<accession>P9WF56</accession>
<accession>L0TD94</accession>
<accession>O33301</accession>
<accession>P67242</accession>
<organism>
    <name type="scientific">Mycobacterium tuberculosis (strain CDC 1551 / Oshkosh)</name>
    <dbReference type="NCBI Taxonomy" id="83331"/>
    <lineage>
        <taxon>Bacteria</taxon>
        <taxon>Bacillati</taxon>
        <taxon>Actinomycetota</taxon>
        <taxon>Actinomycetes</taxon>
        <taxon>Mycobacteriales</taxon>
        <taxon>Mycobacteriaceae</taxon>
        <taxon>Mycobacterium</taxon>
        <taxon>Mycobacterium tuberculosis complex</taxon>
    </lineage>
</organism>
<feature type="chain" id="PRO_0000428597" description="Ribonuclease VapC42">
    <location>
        <begin position="1"/>
        <end position="131"/>
    </location>
</feature>
<feature type="domain" description="PINc" evidence="1">
    <location>
        <begin position="1"/>
        <end position="125"/>
    </location>
</feature>
<feature type="binding site" evidence="1">
    <location>
        <position position="4"/>
    </location>
    <ligand>
        <name>Mg(2+)</name>
        <dbReference type="ChEBI" id="CHEBI:18420"/>
    </ligand>
</feature>
<feature type="binding site" evidence="1">
    <location>
        <position position="100"/>
    </location>
    <ligand>
        <name>Mg(2+)</name>
        <dbReference type="ChEBI" id="CHEBI:18420"/>
    </ligand>
</feature>
<sequence>MIVDTSAIVAIVSGESGAQVLKEALERSPNSRMSAPNYVELCAIMQRRDRPEISRLVDRLLDDYGIQVEAVDADQARVAAQAYRDYGRGSGHPARLNLGDTYSYALAQVTGEPLLFRGDDFTHTDIRPACT</sequence>